<protein>
    <recommendedName>
        <fullName>Envelope protein OPG155</fullName>
    </recommendedName>
</protein>
<keyword id="KW-1015">Disulfide bond</keyword>
<keyword id="KW-1168">Fusion of virus membrane with host membrane</keyword>
<keyword id="KW-0426">Late protein</keyword>
<keyword id="KW-0472">Membrane</keyword>
<keyword id="KW-0597">Phosphoprotein</keyword>
<keyword id="KW-0735">Signal-anchor</keyword>
<keyword id="KW-0812">Transmembrane</keyword>
<keyword id="KW-1133">Transmembrane helix</keyword>
<keyword id="KW-0261">Viral envelope protein</keyword>
<keyword id="KW-1162">Viral penetration into host cytoplasm</keyword>
<keyword id="KW-0946">Virion</keyword>
<keyword id="KW-1160">Virus entry into host cell</keyword>
<dbReference type="EMBL" id="U94848">
    <property type="protein sequence ID" value="AAB96473.1"/>
    <property type="molecule type" value="Genomic_DNA"/>
</dbReference>
<dbReference type="EMBL" id="AY603355">
    <property type="protein sequence ID" value="AAT10537.1"/>
    <property type="molecule type" value="Genomic_DNA"/>
</dbReference>
<dbReference type="SMR" id="P60671"/>
<dbReference type="Proteomes" id="UP000159908">
    <property type="component" value="Segment"/>
</dbReference>
<dbReference type="Proteomes" id="UP000172909">
    <property type="component" value="Segment"/>
</dbReference>
<dbReference type="GO" id="GO:0016020">
    <property type="term" value="C:membrane"/>
    <property type="evidence" value="ECO:0007669"/>
    <property type="project" value="UniProtKB-KW"/>
</dbReference>
<dbReference type="GO" id="GO:0019031">
    <property type="term" value="C:viral envelope"/>
    <property type="evidence" value="ECO:0007669"/>
    <property type="project" value="UniProtKB-KW"/>
</dbReference>
<dbReference type="GO" id="GO:0055036">
    <property type="term" value="C:virion membrane"/>
    <property type="evidence" value="ECO:0007669"/>
    <property type="project" value="UniProtKB-SubCell"/>
</dbReference>
<dbReference type="GO" id="GO:0039663">
    <property type="term" value="P:membrane fusion involved in viral entry into host cell"/>
    <property type="evidence" value="ECO:0007669"/>
    <property type="project" value="UniProtKB-KW"/>
</dbReference>
<dbReference type="GO" id="GO:0046718">
    <property type="term" value="P:symbiont entry into host cell"/>
    <property type="evidence" value="ECO:0007669"/>
    <property type="project" value="UniProtKB-KW"/>
</dbReference>
<dbReference type="InterPro" id="IPR007664">
    <property type="entry name" value="Poxvirus_A28"/>
</dbReference>
<dbReference type="Pfam" id="PF04584">
    <property type="entry name" value="Pox_A28"/>
    <property type="match status" value="1"/>
</dbReference>
<proteinExistence type="inferred from homology"/>
<reference key="1">
    <citation type="journal article" date="1998" name="Virology">
        <title>The complete genomic sequence of the modified vaccinia Ankara strain: comparison with other orthopoxviruses.</title>
        <authorList>
            <person name="Antoine G."/>
            <person name="Scheiflinger F."/>
            <person name="Dorner F."/>
            <person name="Falkner F.G."/>
        </authorList>
    </citation>
    <scope>NUCLEOTIDE SEQUENCE [LARGE SCALE GENOMIC DNA]</scope>
</reference>
<reference key="2">
    <citation type="submission" date="2004-04" db="EMBL/GenBank/DDBJ databases">
        <authorList>
            <person name="Esposito J.J."/>
            <person name="Frace M."/>
            <person name="Sammons S.A."/>
            <person name="Olsen-Rasmussen M.S."/>
            <person name="Osborne J."/>
            <person name="Khristova M."/>
            <person name="Wohlhueter R.M."/>
        </authorList>
    </citation>
    <scope>NUCLEOTIDE SEQUENCE [LARGE SCALE GENOMIC DNA]</scope>
    <source>
        <strain>Isolate Acambis 3000</strain>
    </source>
</reference>
<gene>
    <name type="primary">OPG155</name>
    <name type="ordered locus">MVA139L</name>
    <name type="ordered locus">ACAM3000_MVA_139</name>
</gene>
<comment type="function">
    <text evidence="1">Envelope protein required for virus entry into host cell and for cell-cell fusion (syncytium formation).</text>
</comment>
<comment type="subunit">
    <text evidence="1">Part of a stable entry-fusion complex (EFC) which is at least composed of proteins OPG143, OPG147, OPG155, OPG086, OPG094, OPG107, OPG104, and OPG099. Formation of the viral membrane is necessary for the assembly of the complex. Interacts directly with protein OPG107.</text>
</comment>
<comment type="subcellular location">
    <subcellularLocation>
        <location evidence="1">Virion membrane</location>
        <topology evidence="1">Single-pass type III membrane protein</topology>
    </subcellularLocation>
    <text evidence="1">Component of the mature virion (MV) membrane.</text>
</comment>
<comment type="PTM">
    <text evidence="1">Contains two intramolecular disulfide bonds. They are created by the viral disulfide bond formation pathway, a poxvirus-specific pathway that operates on the cytoplasmic side of the MV membranes.</text>
</comment>
<comment type="similarity">
    <text evidence="3">Belongs to the orthopoxvirus OPG155 protein family.</text>
</comment>
<organism>
    <name type="scientific">Vaccinia virus (strain Ankara)</name>
    <name type="common">VACV</name>
    <dbReference type="NCBI Taxonomy" id="126794"/>
    <lineage>
        <taxon>Viruses</taxon>
        <taxon>Varidnaviria</taxon>
        <taxon>Bamfordvirae</taxon>
        <taxon>Nucleocytoviricota</taxon>
        <taxon>Pokkesviricetes</taxon>
        <taxon>Chitovirales</taxon>
        <taxon>Poxviridae</taxon>
        <taxon>Chordopoxvirinae</taxon>
        <taxon>Orthopoxvirus</taxon>
        <taxon>Vaccinia virus</taxon>
    </lineage>
</organism>
<evidence type="ECO:0000250" key="1">
    <source>
        <dbReference type="UniProtKB" id="P68633"/>
    </source>
</evidence>
<evidence type="ECO:0000255" key="2"/>
<evidence type="ECO:0000305" key="3"/>
<sequence>MNSLSIFFIVVATAAVCLLFIQGYSIYENYGNIKEFNATHAAFEYSKSIGGTPALDRRVQDVNDTISDVKQKWRCVVYPGNGFVSASIFGFQAEVGPNNTRSIRKFNTMQQCIDFTFSDVININIYNPCVVPNINNAECQFLKSVL</sequence>
<name>PG155_VACCA</name>
<accession>P60671</accession>
<accession>Q6J391</accession>
<feature type="chain" id="PRO_0000099298" description="Envelope protein OPG155">
    <location>
        <begin position="1"/>
        <end position="146"/>
    </location>
</feature>
<feature type="transmembrane region" description="Helical; Signal-anchor for type III membrane protein" evidence="2">
    <location>
        <begin position="1"/>
        <end position="21"/>
    </location>
</feature>
<feature type="topological domain" description="Intravirion" evidence="2">
    <location>
        <begin position="22"/>
        <end position="146"/>
    </location>
</feature>
<organismHost>
    <name type="scientific">Homo sapiens</name>
    <name type="common">Human</name>
    <dbReference type="NCBI Taxonomy" id="9606"/>
</organismHost>